<evidence type="ECO:0000255" key="1">
    <source>
        <dbReference type="HAMAP-Rule" id="MF_01384"/>
    </source>
</evidence>
<keyword id="KW-0143">Chaperone</keyword>
<keyword id="KW-0963">Cytoplasm</keyword>
<keyword id="KW-0996">Nickel insertion</keyword>
<comment type="function">
    <text evidence="1">Required for maturation of urease via the functional incorporation of the urease nickel metallocenter.</text>
</comment>
<comment type="subunit">
    <text evidence="1">UreD, UreF and UreG form a complex that acts as a GTP-hydrolysis-dependent molecular chaperone, activating the urease apoprotein by helping to assemble the nickel containing metallocenter of UreC. The UreE protein probably delivers the nickel.</text>
</comment>
<comment type="subcellular location">
    <subcellularLocation>
        <location evidence="1">Cytoplasm</location>
    </subcellularLocation>
</comment>
<comment type="similarity">
    <text evidence="1">Belongs to the UreD family.</text>
</comment>
<name>URED_KLEP7</name>
<dbReference type="EMBL" id="CP000647">
    <property type="protein sequence ID" value="ABR78860.1"/>
    <property type="molecule type" value="Genomic_DNA"/>
</dbReference>
<dbReference type="RefSeq" id="WP_002916869.1">
    <property type="nucleotide sequence ID" value="NC_009648.1"/>
</dbReference>
<dbReference type="SMR" id="A6TE39"/>
<dbReference type="STRING" id="272620.KPN_03464"/>
<dbReference type="PaxDb" id="272620-KPN_03464"/>
<dbReference type="EnsemblBacteria" id="ABR78860">
    <property type="protein sequence ID" value="ABR78860"/>
    <property type="gene ID" value="KPN_03464"/>
</dbReference>
<dbReference type="KEGG" id="kpn:KPN_03464"/>
<dbReference type="HOGENOM" id="CLU_056339_0_0_6"/>
<dbReference type="Proteomes" id="UP000000265">
    <property type="component" value="Chromosome"/>
</dbReference>
<dbReference type="GO" id="GO:0005737">
    <property type="term" value="C:cytoplasm"/>
    <property type="evidence" value="ECO:0007669"/>
    <property type="project" value="UniProtKB-SubCell"/>
</dbReference>
<dbReference type="GO" id="GO:0016151">
    <property type="term" value="F:nickel cation binding"/>
    <property type="evidence" value="ECO:0007669"/>
    <property type="project" value="UniProtKB-UniRule"/>
</dbReference>
<dbReference type="HAMAP" id="MF_01384">
    <property type="entry name" value="UreD"/>
    <property type="match status" value="1"/>
</dbReference>
<dbReference type="InterPro" id="IPR002669">
    <property type="entry name" value="UreD"/>
</dbReference>
<dbReference type="PANTHER" id="PTHR33643">
    <property type="entry name" value="UREASE ACCESSORY PROTEIN D"/>
    <property type="match status" value="1"/>
</dbReference>
<dbReference type="PANTHER" id="PTHR33643:SF1">
    <property type="entry name" value="UREASE ACCESSORY PROTEIN D"/>
    <property type="match status" value="1"/>
</dbReference>
<dbReference type="Pfam" id="PF01774">
    <property type="entry name" value="UreD"/>
    <property type="match status" value="1"/>
</dbReference>
<gene>
    <name evidence="1" type="primary">ureD</name>
    <name type="ordered locus">KPN78578_33990</name>
    <name type="ORF">KPN_03464</name>
</gene>
<accession>A6TE39</accession>
<organism>
    <name type="scientific">Klebsiella pneumoniae subsp. pneumoniae (strain ATCC 700721 / MGH 78578)</name>
    <dbReference type="NCBI Taxonomy" id="272620"/>
    <lineage>
        <taxon>Bacteria</taxon>
        <taxon>Pseudomonadati</taxon>
        <taxon>Pseudomonadota</taxon>
        <taxon>Gammaproteobacteria</taxon>
        <taxon>Enterobacterales</taxon>
        <taxon>Enterobacteriaceae</taxon>
        <taxon>Klebsiella/Raoultella group</taxon>
        <taxon>Klebsiella</taxon>
        <taxon>Klebsiella pneumoniae complex</taxon>
    </lineage>
</organism>
<sequence length="274" mass="30212">MHGTVLPPLKKGWQATLDLRFHQAGGKTVLASAQHVGPLTVQRPFYPEEETCHLYLLHPPGGIVGGDELTISAHLAPGCHTLITMPGASKFYRSSGAQALVRQQLTLAPQATLEWLPQDAIFFPGANARLFTTFHLCASSRLLAWDLLCLGRPVIGETFSHGTLSNRLEVWVDDEPLLVERLQLQEGELSSVAERPWVGTLLCYPATDALLDGVRDALAPLGLYAGASLTDRLLTVRFLSDDNLICQRVMRDVWQFLRPHLTGKSPVLPRIWLT</sequence>
<feature type="chain" id="PRO_0000340458" description="Urease accessory protein UreD">
    <location>
        <begin position="1"/>
        <end position="274"/>
    </location>
</feature>
<reference key="1">
    <citation type="submission" date="2006-09" db="EMBL/GenBank/DDBJ databases">
        <authorList>
            <consortium name="The Klebsiella pneumonia Genome Sequencing Project"/>
            <person name="McClelland M."/>
            <person name="Sanderson E.K."/>
            <person name="Spieth J."/>
            <person name="Clifton W.S."/>
            <person name="Latreille P."/>
            <person name="Sabo A."/>
            <person name="Pepin K."/>
            <person name="Bhonagiri V."/>
            <person name="Porwollik S."/>
            <person name="Ali J."/>
            <person name="Wilson R.K."/>
        </authorList>
    </citation>
    <scope>NUCLEOTIDE SEQUENCE [LARGE SCALE GENOMIC DNA]</scope>
    <source>
        <strain>ATCC 700721 / MGH 78578</strain>
    </source>
</reference>
<proteinExistence type="inferred from homology"/>
<protein>
    <recommendedName>
        <fullName evidence="1">Urease accessory protein UreD</fullName>
    </recommendedName>
</protein>